<gene>
    <name evidence="2" type="primary">gcvH</name>
    <name type="ordered locus">Z4241</name>
    <name type="ordered locus">ECs3775</name>
</gene>
<comment type="function">
    <text evidence="2">The glycine cleavage system catalyzes the degradation of glycine. The H protein shuttles the methylamine group of glycine from the P protein to the T protein.</text>
</comment>
<comment type="cofactor">
    <cofactor evidence="2">
        <name>(R)-lipoate</name>
        <dbReference type="ChEBI" id="CHEBI:83088"/>
    </cofactor>
    <text evidence="2">Binds 1 lipoyl cofactor covalently.</text>
</comment>
<comment type="subunit">
    <text evidence="2">The glycine cleavage system is composed of four proteins: P, T, L and H.</text>
</comment>
<comment type="similarity">
    <text evidence="2">Belongs to the GcvH family.</text>
</comment>
<keyword id="KW-0450">Lipoyl</keyword>
<keyword id="KW-1185">Reference proteome</keyword>
<sequence>MSNVPAELKYSKEHEWLRKEADGTYTVGITEHAQELLGDMVFVDLPEVGATVSAGDDCAVAESVKAASDIYAPVSGEIVAVNDALSDSPELVNSEPYAGGWIFKIKASDESELESLLDATAYEALLEDE</sequence>
<accession>P0A6U0</accession>
<accession>P23884</accession>
<accession>Q8Z3W9</accession>
<organism>
    <name type="scientific">Escherichia coli O157:H7</name>
    <dbReference type="NCBI Taxonomy" id="83334"/>
    <lineage>
        <taxon>Bacteria</taxon>
        <taxon>Pseudomonadati</taxon>
        <taxon>Pseudomonadota</taxon>
        <taxon>Gammaproteobacteria</taxon>
        <taxon>Enterobacterales</taxon>
        <taxon>Enterobacteriaceae</taxon>
        <taxon>Escherichia</taxon>
    </lineage>
</organism>
<name>GCSH_ECO57</name>
<evidence type="ECO:0000250" key="1"/>
<evidence type="ECO:0000255" key="2">
    <source>
        <dbReference type="HAMAP-Rule" id="MF_00272"/>
    </source>
</evidence>
<evidence type="ECO:0000255" key="3">
    <source>
        <dbReference type="PROSITE-ProRule" id="PRU01066"/>
    </source>
</evidence>
<feature type="initiator methionine" description="Removed" evidence="1">
    <location>
        <position position="1"/>
    </location>
</feature>
<feature type="chain" id="PRO_0000166219" description="Glycine cleavage system H protein">
    <location>
        <begin position="2"/>
        <end position="129"/>
    </location>
</feature>
<feature type="domain" description="Lipoyl-binding" evidence="3">
    <location>
        <begin position="24"/>
        <end position="106"/>
    </location>
</feature>
<feature type="modified residue" description="N6-lipoyllysine" evidence="2">
    <location>
        <position position="65"/>
    </location>
</feature>
<protein>
    <recommendedName>
        <fullName evidence="2">Glycine cleavage system H protein</fullName>
    </recommendedName>
</protein>
<dbReference type="EMBL" id="AE005174">
    <property type="protein sequence ID" value="AAG58031.1"/>
    <property type="molecule type" value="Genomic_DNA"/>
</dbReference>
<dbReference type="EMBL" id="BA000007">
    <property type="protein sequence ID" value="BAB37198.1"/>
    <property type="molecule type" value="Genomic_DNA"/>
</dbReference>
<dbReference type="PIR" id="C85946">
    <property type="entry name" value="C85946"/>
</dbReference>
<dbReference type="PIR" id="G91100">
    <property type="entry name" value="G91100"/>
</dbReference>
<dbReference type="RefSeq" id="NP_311802.1">
    <property type="nucleotide sequence ID" value="NC_002695.1"/>
</dbReference>
<dbReference type="RefSeq" id="WP_001295377.1">
    <property type="nucleotide sequence ID" value="NZ_VOAI01000003.1"/>
</dbReference>
<dbReference type="SMR" id="P0A6U0"/>
<dbReference type="STRING" id="155864.Z4241"/>
<dbReference type="GeneID" id="916406"/>
<dbReference type="GeneID" id="93779098"/>
<dbReference type="KEGG" id="ece:Z4241"/>
<dbReference type="KEGG" id="ecs:ECs_3775"/>
<dbReference type="PATRIC" id="fig|386585.9.peg.3940"/>
<dbReference type="eggNOG" id="COG0509">
    <property type="taxonomic scope" value="Bacteria"/>
</dbReference>
<dbReference type="HOGENOM" id="CLU_097408_2_1_6"/>
<dbReference type="OMA" id="KEHEWIR"/>
<dbReference type="Proteomes" id="UP000000558">
    <property type="component" value="Chromosome"/>
</dbReference>
<dbReference type="Proteomes" id="UP000002519">
    <property type="component" value="Chromosome"/>
</dbReference>
<dbReference type="GO" id="GO:0005829">
    <property type="term" value="C:cytosol"/>
    <property type="evidence" value="ECO:0007669"/>
    <property type="project" value="TreeGrafter"/>
</dbReference>
<dbReference type="GO" id="GO:0005960">
    <property type="term" value="C:glycine cleavage complex"/>
    <property type="evidence" value="ECO:0007669"/>
    <property type="project" value="InterPro"/>
</dbReference>
<dbReference type="GO" id="GO:0019464">
    <property type="term" value="P:glycine decarboxylation via glycine cleavage system"/>
    <property type="evidence" value="ECO:0007669"/>
    <property type="project" value="UniProtKB-UniRule"/>
</dbReference>
<dbReference type="CDD" id="cd06848">
    <property type="entry name" value="GCS_H"/>
    <property type="match status" value="1"/>
</dbReference>
<dbReference type="FunFam" id="2.40.50.100:FF:000011">
    <property type="entry name" value="Glycine cleavage system H protein"/>
    <property type="match status" value="1"/>
</dbReference>
<dbReference type="Gene3D" id="2.40.50.100">
    <property type="match status" value="1"/>
</dbReference>
<dbReference type="HAMAP" id="MF_00272">
    <property type="entry name" value="GcvH"/>
    <property type="match status" value="1"/>
</dbReference>
<dbReference type="InterPro" id="IPR003016">
    <property type="entry name" value="2-oxoA_DH_lipoyl-BS"/>
</dbReference>
<dbReference type="InterPro" id="IPR000089">
    <property type="entry name" value="Biotin_lipoyl"/>
</dbReference>
<dbReference type="InterPro" id="IPR002930">
    <property type="entry name" value="GCV_H"/>
</dbReference>
<dbReference type="InterPro" id="IPR033753">
    <property type="entry name" value="GCV_H/Fam206"/>
</dbReference>
<dbReference type="InterPro" id="IPR017453">
    <property type="entry name" value="GCV_H_sub"/>
</dbReference>
<dbReference type="InterPro" id="IPR011053">
    <property type="entry name" value="Single_hybrid_motif"/>
</dbReference>
<dbReference type="NCBIfam" id="TIGR00527">
    <property type="entry name" value="gcvH"/>
    <property type="match status" value="1"/>
</dbReference>
<dbReference type="NCBIfam" id="NF002270">
    <property type="entry name" value="PRK01202.1"/>
    <property type="match status" value="1"/>
</dbReference>
<dbReference type="PANTHER" id="PTHR11715">
    <property type="entry name" value="GLYCINE CLEAVAGE SYSTEM H PROTEIN"/>
    <property type="match status" value="1"/>
</dbReference>
<dbReference type="PANTHER" id="PTHR11715:SF3">
    <property type="entry name" value="GLYCINE CLEAVAGE SYSTEM H PROTEIN-RELATED"/>
    <property type="match status" value="1"/>
</dbReference>
<dbReference type="Pfam" id="PF01597">
    <property type="entry name" value="GCV_H"/>
    <property type="match status" value="1"/>
</dbReference>
<dbReference type="SUPFAM" id="SSF51230">
    <property type="entry name" value="Single hybrid motif"/>
    <property type="match status" value="1"/>
</dbReference>
<dbReference type="PROSITE" id="PS50968">
    <property type="entry name" value="BIOTINYL_LIPOYL"/>
    <property type="match status" value="1"/>
</dbReference>
<dbReference type="PROSITE" id="PS00189">
    <property type="entry name" value="LIPOYL"/>
    <property type="match status" value="1"/>
</dbReference>
<reference key="1">
    <citation type="journal article" date="2001" name="Nature">
        <title>Genome sequence of enterohaemorrhagic Escherichia coli O157:H7.</title>
        <authorList>
            <person name="Perna N.T."/>
            <person name="Plunkett G. III"/>
            <person name="Burland V."/>
            <person name="Mau B."/>
            <person name="Glasner J.D."/>
            <person name="Rose D.J."/>
            <person name="Mayhew G.F."/>
            <person name="Evans P.S."/>
            <person name="Gregor J."/>
            <person name="Kirkpatrick H.A."/>
            <person name="Posfai G."/>
            <person name="Hackett J."/>
            <person name="Klink S."/>
            <person name="Boutin A."/>
            <person name="Shao Y."/>
            <person name="Miller L."/>
            <person name="Grotbeck E.J."/>
            <person name="Davis N.W."/>
            <person name="Lim A."/>
            <person name="Dimalanta E.T."/>
            <person name="Potamousis K."/>
            <person name="Apodaca J."/>
            <person name="Anantharaman T.S."/>
            <person name="Lin J."/>
            <person name="Yen G."/>
            <person name="Schwartz D.C."/>
            <person name="Welch R.A."/>
            <person name="Blattner F.R."/>
        </authorList>
    </citation>
    <scope>NUCLEOTIDE SEQUENCE [LARGE SCALE GENOMIC DNA]</scope>
    <source>
        <strain>O157:H7 / EDL933 / ATCC 700927 / EHEC</strain>
    </source>
</reference>
<reference key="2">
    <citation type="journal article" date="2001" name="DNA Res.">
        <title>Complete genome sequence of enterohemorrhagic Escherichia coli O157:H7 and genomic comparison with a laboratory strain K-12.</title>
        <authorList>
            <person name="Hayashi T."/>
            <person name="Makino K."/>
            <person name="Ohnishi M."/>
            <person name="Kurokawa K."/>
            <person name="Ishii K."/>
            <person name="Yokoyama K."/>
            <person name="Han C.-G."/>
            <person name="Ohtsubo E."/>
            <person name="Nakayama K."/>
            <person name="Murata T."/>
            <person name="Tanaka M."/>
            <person name="Tobe T."/>
            <person name="Iida T."/>
            <person name="Takami H."/>
            <person name="Honda T."/>
            <person name="Sasakawa C."/>
            <person name="Ogasawara N."/>
            <person name="Yasunaga T."/>
            <person name="Kuhara S."/>
            <person name="Shiba T."/>
            <person name="Hattori M."/>
            <person name="Shinagawa H."/>
        </authorList>
    </citation>
    <scope>NUCLEOTIDE SEQUENCE [LARGE SCALE GENOMIC DNA]</scope>
    <source>
        <strain>O157:H7 / Sakai / RIMD 0509952 / EHEC</strain>
    </source>
</reference>
<proteinExistence type="inferred from homology"/>